<gene>
    <name evidence="1" type="primary">hisE</name>
    <name type="ordered locus">Mflv_3056</name>
</gene>
<proteinExistence type="inferred from homology"/>
<reference key="1">
    <citation type="submission" date="2007-04" db="EMBL/GenBank/DDBJ databases">
        <title>Complete sequence of chromosome of Mycobacterium gilvum PYR-GCK.</title>
        <authorList>
            <consortium name="US DOE Joint Genome Institute"/>
            <person name="Copeland A."/>
            <person name="Lucas S."/>
            <person name="Lapidus A."/>
            <person name="Barry K."/>
            <person name="Detter J.C."/>
            <person name="Glavina del Rio T."/>
            <person name="Hammon N."/>
            <person name="Israni S."/>
            <person name="Dalin E."/>
            <person name="Tice H."/>
            <person name="Pitluck S."/>
            <person name="Chain P."/>
            <person name="Malfatti S."/>
            <person name="Shin M."/>
            <person name="Vergez L."/>
            <person name="Schmutz J."/>
            <person name="Larimer F."/>
            <person name="Land M."/>
            <person name="Hauser L."/>
            <person name="Kyrpides N."/>
            <person name="Mikhailova N."/>
            <person name="Miller C."/>
            <person name="Richardson P."/>
        </authorList>
    </citation>
    <scope>NUCLEOTIDE SEQUENCE [LARGE SCALE GENOMIC DNA]</scope>
    <source>
        <strain>PYR-GCK</strain>
    </source>
</reference>
<protein>
    <recommendedName>
        <fullName evidence="1">Phosphoribosyl-ATP pyrophosphatase</fullName>
        <shortName evidence="1">PRA-PH</shortName>
        <ecNumber evidence="1">3.6.1.31</ecNumber>
    </recommendedName>
</protein>
<dbReference type="EC" id="3.6.1.31" evidence="1"/>
<dbReference type="EMBL" id="CP000656">
    <property type="protein sequence ID" value="ABP45533.1"/>
    <property type="molecule type" value="Genomic_DNA"/>
</dbReference>
<dbReference type="SMR" id="A4TB82"/>
<dbReference type="STRING" id="350054.Mflv_3056"/>
<dbReference type="KEGG" id="mgi:Mflv_3056"/>
<dbReference type="eggNOG" id="COG0140">
    <property type="taxonomic scope" value="Bacteria"/>
</dbReference>
<dbReference type="HOGENOM" id="CLU_123337_2_0_11"/>
<dbReference type="OrthoDB" id="3212875at2"/>
<dbReference type="UniPathway" id="UPA00031">
    <property type="reaction ID" value="UER00007"/>
</dbReference>
<dbReference type="GO" id="GO:0005737">
    <property type="term" value="C:cytoplasm"/>
    <property type="evidence" value="ECO:0007669"/>
    <property type="project" value="UniProtKB-SubCell"/>
</dbReference>
<dbReference type="GO" id="GO:0005524">
    <property type="term" value="F:ATP binding"/>
    <property type="evidence" value="ECO:0007669"/>
    <property type="project" value="UniProtKB-KW"/>
</dbReference>
<dbReference type="GO" id="GO:0004636">
    <property type="term" value="F:phosphoribosyl-ATP diphosphatase activity"/>
    <property type="evidence" value="ECO:0007669"/>
    <property type="project" value="UniProtKB-UniRule"/>
</dbReference>
<dbReference type="GO" id="GO:0000105">
    <property type="term" value="P:L-histidine biosynthetic process"/>
    <property type="evidence" value="ECO:0007669"/>
    <property type="project" value="UniProtKB-UniRule"/>
</dbReference>
<dbReference type="CDD" id="cd11547">
    <property type="entry name" value="NTP-PPase_HisE"/>
    <property type="match status" value="1"/>
</dbReference>
<dbReference type="Gene3D" id="1.10.287.1080">
    <property type="entry name" value="MazG-like"/>
    <property type="match status" value="1"/>
</dbReference>
<dbReference type="HAMAP" id="MF_01020">
    <property type="entry name" value="HisE"/>
    <property type="match status" value="1"/>
</dbReference>
<dbReference type="InterPro" id="IPR008179">
    <property type="entry name" value="HisE"/>
</dbReference>
<dbReference type="InterPro" id="IPR021130">
    <property type="entry name" value="PRib-ATP_PPHydrolase-like"/>
</dbReference>
<dbReference type="NCBIfam" id="TIGR03188">
    <property type="entry name" value="histidine_hisI"/>
    <property type="match status" value="1"/>
</dbReference>
<dbReference type="NCBIfam" id="NF001610">
    <property type="entry name" value="PRK00400.1-1"/>
    <property type="match status" value="1"/>
</dbReference>
<dbReference type="PANTHER" id="PTHR42945">
    <property type="entry name" value="HISTIDINE BIOSYNTHESIS BIFUNCTIONAL PROTEIN"/>
    <property type="match status" value="1"/>
</dbReference>
<dbReference type="PANTHER" id="PTHR42945:SF1">
    <property type="entry name" value="HISTIDINE BIOSYNTHESIS BIFUNCTIONAL PROTEIN HIS7"/>
    <property type="match status" value="1"/>
</dbReference>
<dbReference type="Pfam" id="PF01503">
    <property type="entry name" value="PRA-PH"/>
    <property type="match status" value="1"/>
</dbReference>
<dbReference type="SUPFAM" id="SSF101386">
    <property type="entry name" value="all-alpha NTP pyrophosphatases"/>
    <property type="match status" value="1"/>
</dbReference>
<keyword id="KW-0028">Amino-acid biosynthesis</keyword>
<keyword id="KW-0067">ATP-binding</keyword>
<keyword id="KW-0963">Cytoplasm</keyword>
<keyword id="KW-0368">Histidine biosynthesis</keyword>
<keyword id="KW-0378">Hydrolase</keyword>
<keyword id="KW-0547">Nucleotide-binding</keyword>
<comment type="catalytic activity">
    <reaction evidence="1">
        <text>1-(5-phospho-beta-D-ribosyl)-ATP + H2O = 1-(5-phospho-beta-D-ribosyl)-5'-AMP + diphosphate + H(+)</text>
        <dbReference type="Rhea" id="RHEA:22828"/>
        <dbReference type="ChEBI" id="CHEBI:15377"/>
        <dbReference type="ChEBI" id="CHEBI:15378"/>
        <dbReference type="ChEBI" id="CHEBI:33019"/>
        <dbReference type="ChEBI" id="CHEBI:59457"/>
        <dbReference type="ChEBI" id="CHEBI:73183"/>
        <dbReference type="EC" id="3.6.1.31"/>
    </reaction>
</comment>
<comment type="pathway">
    <text evidence="1">Amino-acid biosynthesis; L-histidine biosynthesis; L-histidine from 5-phospho-alpha-D-ribose 1-diphosphate: step 2/9.</text>
</comment>
<comment type="subcellular location">
    <subcellularLocation>
        <location evidence="1">Cytoplasm</location>
    </subcellularLocation>
</comment>
<comment type="similarity">
    <text evidence="1">Belongs to the PRA-PH family.</text>
</comment>
<name>HIS2_MYCGI</name>
<evidence type="ECO:0000255" key="1">
    <source>
        <dbReference type="HAMAP-Rule" id="MF_01020"/>
    </source>
</evidence>
<feature type="chain" id="PRO_1000084170" description="Phosphoribosyl-ATP pyrophosphatase">
    <location>
        <begin position="1"/>
        <end position="93"/>
    </location>
</feature>
<accession>A4TB82</accession>
<sequence length="93" mass="10020">MTQSSNVKTFDALFAELSERARTRPAGSGTVAALDGGVHGIGKKILEEAGEVWLAAEHESDDALAEEISQLLYWTQVLMLARGLSLDDVYGKL</sequence>
<organism>
    <name type="scientific">Mycolicibacterium gilvum (strain PYR-GCK)</name>
    <name type="common">Mycobacterium gilvum (strain PYR-GCK)</name>
    <dbReference type="NCBI Taxonomy" id="350054"/>
    <lineage>
        <taxon>Bacteria</taxon>
        <taxon>Bacillati</taxon>
        <taxon>Actinomycetota</taxon>
        <taxon>Actinomycetes</taxon>
        <taxon>Mycobacteriales</taxon>
        <taxon>Mycobacteriaceae</taxon>
        <taxon>Mycolicibacterium</taxon>
    </lineage>
</organism>